<comment type="similarity">
    <text evidence="1">Belongs to the herpesviridae UL91 family.</text>
</comment>
<accession>O36379</accession>
<feature type="chain" id="PRO_0000405720" description="Uncharacterized gene 30 protein">
    <location>
        <begin position="1"/>
        <end position="85"/>
    </location>
</feature>
<dbReference type="EMBL" id="AF005370">
    <property type="protein sequence ID" value="AAC58076.1"/>
    <property type="molecule type" value="Genomic_DNA"/>
</dbReference>
<dbReference type="PIR" id="T03124">
    <property type="entry name" value="T03124"/>
</dbReference>
<dbReference type="RefSeq" id="NP_065528.1">
    <property type="nucleotide sequence ID" value="NC_002531.1"/>
</dbReference>
<dbReference type="KEGG" id="vg:911745"/>
<dbReference type="Proteomes" id="UP000000941">
    <property type="component" value="Segment"/>
</dbReference>
<dbReference type="InterPro" id="IPR008002">
    <property type="entry name" value="Herpes_Orf30"/>
</dbReference>
<dbReference type="Pfam" id="PF05338">
    <property type="entry name" value="DUF717"/>
    <property type="match status" value="1"/>
</dbReference>
<sequence>MKRGALEPSDFQNCLKLFSQPFPQILDQCASNLQTLRHTQGPMQHLELLTLLFDLAGAECLKEVTKVQCTKKDADPVLTNVILPK</sequence>
<organism>
    <name type="scientific">Alcelaphine herpesvirus 1 (strain C500)</name>
    <name type="common">AlHV-1</name>
    <name type="synonym">Malignant catarrhal fever virus</name>
    <dbReference type="NCBI Taxonomy" id="654901"/>
    <lineage>
        <taxon>Viruses</taxon>
        <taxon>Duplodnaviria</taxon>
        <taxon>Heunggongvirae</taxon>
        <taxon>Peploviricota</taxon>
        <taxon>Herviviricetes</taxon>
        <taxon>Herpesvirales</taxon>
        <taxon>Orthoherpesviridae</taxon>
        <taxon>Gammaherpesvirinae</taxon>
        <taxon>Macavirus</taxon>
        <taxon>Macavirus alcelaphinegamma1</taxon>
    </lineage>
</organism>
<keyword id="KW-1185">Reference proteome</keyword>
<reference key="1">
    <citation type="journal article" date="1997" name="J. Virol.">
        <title>Primary structure of the alcelaphine herpesvirus 1 genome.</title>
        <authorList>
            <person name="Ensser A."/>
            <person name="Pflanz R."/>
            <person name="Fleckenstein B."/>
        </authorList>
    </citation>
    <scope>NUCLEOTIDE SEQUENCE [LARGE SCALE GENOMIC DNA]</scope>
</reference>
<evidence type="ECO:0000305" key="1"/>
<organismHost>
    <name type="scientific">Connochaetes taurinus</name>
    <name type="common">Blue wildebeest</name>
    <dbReference type="NCBI Taxonomy" id="9927"/>
</organismHost>
<protein>
    <recommendedName>
        <fullName>Uncharacterized gene 30 protein</fullName>
    </recommendedName>
</protein>
<name>UL91_ALHV1</name>
<proteinExistence type="inferred from homology"/>
<gene>
    <name type="primary">30</name>
</gene>